<name>RBFA_DECAR</name>
<dbReference type="EMBL" id="CP000089">
    <property type="protein sequence ID" value="AAZ47186.1"/>
    <property type="molecule type" value="Genomic_DNA"/>
</dbReference>
<dbReference type="SMR" id="Q47D95"/>
<dbReference type="STRING" id="159087.Daro_2451"/>
<dbReference type="KEGG" id="dar:Daro_2451"/>
<dbReference type="eggNOG" id="COG0858">
    <property type="taxonomic scope" value="Bacteria"/>
</dbReference>
<dbReference type="HOGENOM" id="CLU_089475_5_1_4"/>
<dbReference type="OrthoDB" id="307788at2"/>
<dbReference type="GO" id="GO:0005829">
    <property type="term" value="C:cytosol"/>
    <property type="evidence" value="ECO:0007669"/>
    <property type="project" value="TreeGrafter"/>
</dbReference>
<dbReference type="GO" id="GO:0043024">
    <property type="term" value="F:ribosomal small subunit binding"/>
    <property type="evidence" value="ECO:0007669"/>
    <property type="project" value="TreeGrafter"/>
</dbReference>
<dbReference type="GO" id="GO:0030490">
    <property type="term" value="P:maturation of SSU-rRNA"/>
    <property type="evidence" value="ECO:0007669"/>
    <property type="project" value="UniProtKB-UniRule"/>
</dbReference>
<dbReference type="Gene3D" id="3.30.300.20">
    <property type="match status" value="1"/>
</dbReference>
<dbReference type="HAMAP" id="MF_00003">
    <property type="entry name" value="RbfA"/>
    <property type="match status" value="1"/>
</dbReference>
<dbReference type="InterPro" id="IPR015946">
    <property type="entry name" value="KH_dom-like_a/b"/>
</dbReference>
<dbReference type="InterPro" id="IPR000238">
    <property type="entry name" value="RbfA"/>
</dbReference>
<dbReference type="InterPro" id="IPR023799">
    <property type="entry name" value="RbfA_dom_sf"/>
</dbReference>
<dbReference type="NCBIfam" id="TIGR00082">
    <property type="entry name" value="rbfA"/>
    <property type="match status" value="1"/>
</dbReference>
<dbReference type="PANTHER" id="PTHR33515">
    <property type="entry name" value="RIBOSOME-BINDING FACTOR A, CHLOROPLASTIC-RELATED"/>
    <property type="match status" value="1"/>
</dbReference>
<dbReference type="PANTHER" id="PTHR33515:SF1">
    <property type="entry name" value="RIBOSOME-BINDING FACTOR A, CHLOROPLASTIC-RELATED"/>
    <property type="match status" value="1"/>
</dbReference>
<dbReference type="Pfam" id="PF02033">
    <property type="entry name" value="RBFA"/>
    <property type="match status" value="1"/>
</dbReference>
<dbReference type="SUPFAM" id="SSF89919">
    <property type="entry name" value="Ribosome-binding factor A, RbfA"/>
    <property type="match status" value="1"/>
</dbReference>
<organism>
    <name type="scientific">Dechloromonas aromatica (strain RCB)</name>
    <dbReference type="NCBI Taxonomy" id="159087"/>
    <lineage>
        <taxon>Bacteria</taxon>
        <taxon>Pseudomonadati</taxon>
        <taxon>Pseudomonadota</taxon>
        <taxon>Betaproteobacteria</taxon>
        <taxon>Rhodocyclales</taxon>
        <taxon>Azonexaceae</taxon>
        <taxon>Dechloromonas</taxon>
    </lineage>
</organism>
<keyword id="KW-0963">Cytoplasm</keyword>
<keyword id="KW-0690">Ribosome biogenesis</keyword>
<accession>Q47D95</accession>
<feature type="chain" id="PRO_0000321215" description="Ribosome-binding factor A">
    <location>
        <begin position="1"/>
        <end position="123"/>
    </location>
</feature>
<reference key="1">
    <citation type="journal article" date="2009" name="BMC Genomics">
        <title>Metabolic analysis of the soil microbe Dechloromonas aromatica str. RCB: indications of a surprisingly complex life-style and cryptic anaerobic pathways for aromatic degradation.</title>
        <authorList>
            <person name="Salinero K.K."/>
            <person name="Keller K."/>
            <person name="Feil W.S."/>
            <person name="Feil H."/>
            <person name="Trong S."/>
            <person name="Di Bartolo G."/>
            <person name="Lapidus A."/>
        </authorList>
    </citation>
    <scope>NUCLEOTIDE SEQUENCE [LARGE SCALE GENOMIC DNA]</scope>
    <source>
        <strain>RCB</strain>
    </source>
</reference>
<sequence length="123" mass="14010">MKKKGFQRSDRVAEQVRRDLADLIRTELKDPRVGMISLTAVELTPDYAHAKVFFATLNSEHLEEVERGLKRAAGFLRRELGKRIHIHTLPELHFVYDSSIERGASLSLLIDQANALSDQTPEE</sequence>
<protein>
    <recommendedName>
        <fullName evidence="1">Ribosome-binding factor A</fullName>
    </recommendedName>
</protein>
<proteinExistence type="inferred from homology"/>
<evidence type="ECO:0000255" key="1">
    <source>
        <dbReference type="HAMAP-Rule" id="MF_00003"/>
    </source>
</evidence>
<comment type="function">
    <text evidence="1">One of several proteins that assist in the late maturation steps of the functional core of the 30S ribosomal subunit. Associates with free 30S ribosomal subunits (but not with 30S subunits that are part of 70S ribosomes or polysomes). Required for efficient processing of 16S rRNA. May interact with the 5'-terminal helix region of 16S rRNA.</text>
</comment>
<comment type="subunit">
    <text evidence="1">Monomer. Binds 30S ribosomal subunits, but not 50S ribosomal subunits or 70S ribosomes.</text>
</comment>
<comment type="subcellular location">
    <subcellularLocation>
        <location evidence="1">Cytoplasm</location>
    </subcellularLocation>
</comment>
<comment type="similarity">
    <text evidence="1">Belongs to the RbfA family.</text>
</comment>
<gene>
    <name evidence="1" type="primary">rbfA</name>
    <name type="ordered locus">Daro_2451</name>
</gene>